<protein>
    <recommendedName>
        <fullName>Iron-regulated surface determinant protein B</fullName>
    </recommendedName>
    <alternativeName>
        <fullName>Fur-regulated protein B</fullName>
    </alternativeName>
    <alternativeName>
        <fullName>Staphylococcal iron-regulated protein H</fullName>
    </alternativeName>
    <alternativeName>
        <fullName>Staphylococcus aureus surface protein J</fullName>
    </alternativeName>
</protein>
<reference key="1">
    <citation type="journal article" date="2004" name="Proc. Natl. Acad. Sci. U.S.A.">
        <title>Complete genomes of two clinical Staphylococcus aureus strains: evidence for the rapid evolution of virulence and drug resistance.</title>
        <authorList>
            <person name="Holden M.T.G."/>
            <person name="Feil E.J."/>
            <person name="Lindsay J.A."/>
            <person name="Peacock S.J."/>
            <person name="Day N.P.J."/>
            <person name="Enright M.C."/>
            <person name="Foster T.J."/>
            <person name="Moore C.E."/>
            <person name="Hurst L."/>
            <person name="Atkin R."/>
            <person name="Barron A."/>
            <person name="Bason N."/>
            <person name="Bentley S.D."/>
            <person name="Chillingworth C."/>
            <person name="Chillingworth T."/>
            <person name="Churcher C."/>
            <person name="Clark L."/>
            <person name="Corton C."/>
            <person name="Cronin A."/>
            <person name="Doggett J."/>
            <person name="Dowd L."/>
            <person name="Feltwell T."/>
            <person name="Hance Z."/>
            <person name="Harris B."/>
            <person name="Hauser H."/>
            <person name="Holroyd S."/>
            <person name="Jagels K."/>
            <person name="James K.D."/>
            <person name="Lennard N."/>
            <person name="Line A."/>
            <person name="Mayes R."/>
            <person name="Moule S."/>
            <person name="Mungall K."/>
            <person name="Ormond D."/>
            <person name="Quail M.A."/>
            <person name="Rabbinowitsch E."/>
            <person name="Rutherford K.M."/>
            <person name="Sanders M."/>
            <person name="Sharp S."/>
            <person name="Simmonds M."/>
            <person name="Stevens K."/>
            <person name="Whitehead S."/>
            <person name="Barrell B.G."/>
            <person name="Spratt B.G."/>
            <person name="Parkhill J."/>
        </authorList>
    </citation>
    <scope>NUCLEOTIDE SEQUENCE [LARGE SCALE GENOMIC DNA]</scope>
    <source>
        <strain>MRSA252</strain>
    </source>
</reference>
<reference key="2">
    <citation type="journal article" date="2008" name="J. Immunol.">
        <title>Neutrophil microbicides induce a pathogen survival response in community-associated methicillin-resistant Staphylococcus aureus.</title>
        <authorList>
            <person name="Palazzolo-Ballance A.M."/>
            <person name="Reniere M.L."/>
            <person name="Braughton K.R."/>
            <person name="Sturdevant D.E."/>
            <person name="Otto M."/>
            <person name="Kreiswirth B.N."/>
            <person name="Skaar E.P."/>
            <person name="DeLeo F.R."/>
        </authorList>
    </citation>
    <scope>INDUCTION</scope>
</reference>
<sequence length="652" mass="72999">MNKQQKEFKSFYSIRKSSLGVASVAISTLLLLMSNGEAKAAEETGVTNTEAQPKTEAVASPTTTTTEKAPEAKPVAKPVANAVSVSNKEVVAPTTETKEAKEVKAVKEVKAPKEAKEEKPAAKADNNTYPILNQELREAIKNPAIKDKDHSAPNSRPIDFEMKKKDGTQQFYHYASSVKPARVIFTDSKPEIELGLQSGQFWRKFEVYEGDKKLPIKLVSYDTVKDYAYIRFSVSNGTKAVKIVSSTHFNNKEEKYDYTLMEFAQPIYNSADKFKTEEDYKAEKLLAPYKKAKTLERQVYELNKIQDKLPEKLKAEYKKKLEETKKALDEQVKSAITEFQNVQPTNEKMTDLQDTKYVVYESVENNESMMDAFVKHPIKTGMLNGKKYMVMETTNDDYWKDFMVEGQRVRTISKDAKNNTRTIIFPYVEGKTLYDAIVKVHVKTIDYDGQYHVRIVDKEAFTKANADKTNKKEQQDNSAKKETTPAMPSKPTTPPVEKESQKQDSQKDDNKQSPSVEKENDASSESGKDKMPVTKPAKAEVESSSTTPTKVVSTTQNVAKPTTASSETTKDVVQTSAGSSEAKDSAPLQKANIKNTNDGHTQSQNNKNTQENKAKSLPQTGEESNKDMTLPLMALIALSSIVAFVLPRKRKN</sequence>
<comment type="function">
    <text evidence="2">Cell wall-anchored surface receptor that extracts heme from oxidized metHb to enable growth on hemoglobin as a sole iron source. Rapidly extracts heme from hemoglobin and transfers it to IsdA or IsdC, which then relays it to the membrane transporter/IsdEF for internalization. Also promotes resistance to hydrogen peroxide and killing by neutrophils.</text>
</comment>
<comment type="subunit">
    <text evidence="2">Interacts with host HBA; this interaction allows heme extraction as iron source. Interacts with IsdA.</text>
</comment>
<comment type="subcellular location">
    <subcellularLocation>
        <location evidence="2">Secreted</location>
        <location evidence="2">Cell wall</location>
        <topology evidence="2">Peptidoglycan-anchor</topology>
    </subcellularLocation>
    <text evidence="2">Anchored to the cell wall by sortase A.</text>
</comment>
<comment type="induction">
    <text evidence="1 9">Repressed by fur in the presence of iron (By similarity). Transcriptionally up-regulated by hydrogen peroxide and to a lesser extent by hypochlorous acid and human neutrophil azurophilic granule proteins.</text>
</comment>
<comment type="similarity">
    <text evidence="10">Belongs to the IsdB family.</text>
</comment>
<evidence type="ECO:0000250" key="1"/>
<evidence type="ECO:0000250" key="2">
    <source>
        <dbReference type="UniProtKB" id="A6QG30"/>
    </source>
</evidence>
<evidence type="ECO:0000250" key="3">
    <source>
        <dbReference type="UniProtKB" id="Q2FZF0"/>
    </source>
</evidence>
<evidence type="ECO:0000250" key="4">
    <source>
        <dbReference type="UniProtKB" id="Q7A656"/>
    </source>
</evidence>
<evidence type="ECO:0000255" key="5"/>
<evidence type="ECO:0000255" key="6">
    <source>
        <dbReference type="PROSITE-ProRule" id="PRU00337"/>
    </source>
</evidence>
<evidence type="ECO:0000255" key="7">
    <source>
        <dbReference type="PROSITE-ProRule" id="PRU00477"/>
    </source>
</evidence>
<evidence type="ECO:0000256" key="8">
    <source>
        <dbReference type="SAM" id="MobiDB-lite"/>
    </source>
</evidence>
<evidence type="ECO:0000269" key="9">
    <source>
    </source>
</evidence>
<evidence type="ECO:0000305" key="10"/>
<gene>
    <name type="primary">isdB</name>
    <name type="synonym">frpB</name>
    <name type="synonym">sasJ</name>
    <name type="synonym">sirH</name>
    <name type="ordered locus">SAR1102</name>
</gene>
<feature type="signal peptide" evidence="5">
    <location>
        <begin position="1"/>
        <end position="40"/>
    </location>
</feature>
<feature type="chain" id="PRO_0000292569" description="Iron-regulated surface determinant protein B">
    <location>
        <begin position="41"/>
        <end position="620"/>
    </location>
</feature>
<feature type="propeptide" id="PRO_0000292570" description="Removed by sortase" evidence="7">
    <location>
        <begin position="621"/>
        <end position="652"/>
    </location>
</feature>
<feature type="domain" description="NEAT 1" evidence="6">
    <location>
        <begin position="151"/>
        <end position="276"/>
    </location>
</feature>
<feature type="domain" description="NEAT 2" evidence="6">
    <location>
        <begin position="348"/>
        <end position="465"/>
    </location>
</feature>
<feature type="region of interest" description="Disordered" evidence="8">
    <location>
        <begin position="41"/>
        <end position="75"/>
    </location>
</feature>
<feature type="region of interest" description="Disordered" evidence="8">
    <location>
        <begin position="466"/>
        <end position="626"/>
    </location>
</feature>
<feature type="short sequence motif" description="YSIRK-G/S signaling motif" evidence="3">
    <location>
        <begin position="12"/>
        <end position="23"/>
    </location>
</feature>
<feature type="short sequence motif" description="LPXTG sorting signal" evidence="7">
    <location>
        <begin position="617"/>
        <end position="621"/>
    </location>
</feature>
<feature type="compositionally biased region" description="Low complexity" evidence="8">
    <location>
        <begin position="54"/>
        <end position="75"/>
    </location>
</feature>
<feature type="compositionally biased region" description="Basic and acidic residues" evidence="8">
    <location>
        <begin position="466"/>
        <end position="483"/>
    </location>
</feature>
<feature type="compositionally biased region" description="Basic and acidic residues" evidence="8">
    <location>
        <begin position="496"/>
        <end position="541"/>
    </location>
</feature>
<feature type="compositionally biased region" description="Low complexity" evidence="8">
    <location>
        <begin position="542"/>
        <end position="555"/>
    </location>
</feature>
<feature type="compositionally biased region" description="Polar residues" evidence="8">
    <location>
        <begin position="556"/>
        <end position="579"/>
    </location>
</feature>
<feature type="compositionally biased region" description="Polar residues" evidence="8">
    <location>
        <begin position="592"/>
        <end position="622"/>
    </location>
</feature>
<feature type="binding site" description="axial binding residue" evidence="4">
    <location>
        <position position="369"/>
    </location>
    <ligand>
        <name>heme</name>
        <dbReference type="ChEBI" id="CHEBI:30413"/>
    </ligand>
    <ligandPart>
        <name>Fe</name>
        <dbReference type="ChEBI" id="CHEBI:18248"/>
    </ligandPart>
</feature>
<feature type="binding site" description="axial binding residue" evidence="4">
    <location>
        <position position="447"/>
    </location>
    <ligand>
        <name>heme</name>
        <dbReference type="ChEBI" id="CHEBI:30413"/>
    </ligand>
    <ligandPart>
        <name>Fe</name>
        <dbReference type="ChEBI" id="CHEBI:18248"/>
    </ligandPart>
</feature>
<feature type="modified residue" description="Pentaglycyl murein peptidoglycan amidated threonine" evidence="7">
    <location>
        <position position="620"/>
    </location>
</feature>
<organism>
    <name type="scientific">Staphylococcus aureus (strain MRSA252)</name>
    <dbReference type="NCBI Taxonomy" id="282458"/>
    <lineage>
        <taxon>Bacteria</taxon>
        <taxon>Bacillati</taxon>
        <taxon>Bacillota</taxon>
        <taxon>Bacilli</taxon>
        <taxon>Bacillales</taxon>
        <taxon>Staphylococcaceae</taxon>
        <taxon>Staphylococcus</taxon>
    </lineage>
</organism>
<dbReference type="EMBL" id="BX571856">
    <property type="protein sequence ID" value="CAG40104.1"/>
    <property type="molecule type" value="Genomic_DNA"/>
</dbReference>
<dbReference type="RefSeq" id="WP_001041573.1">
    <property type="nucleotide sequence ID" value="NC_002952.2"/>
</dbReference>
<dbReference type="SMR" id="Q6GHV7"/>
<dbReference type="TCDB" id="9.A.39.1.1">
    <property type="family name" value="the gram-positive bacterial hemoglobin receptor (isd) family"/>
</dbReference>
<dbReference type="TCDB" id="9.A.39.1.2">
    <property type="family name" value="the gram-positive bacterial hemoglobin receptor (isd) family"/>
</dbReference>
<dbReference type="KEGG" id="sar:SAR1102"/>
<dbReference type="HOGENOM" id="CLU_016167_0_0_9"/>
<dbReference type="PRO" id="PR:Q6GHV7"/>
<dbReference type="Proteomes" id="UP000000596">
    <property type="component" value="Chromosome"/>
</dbReference>
<dbReference type="GO" id="GO:0005576">
    <property type="term" value="C:extracellular region"/>
    <property type="evidence" value="ECO:0007669"/>
    <property type="project" value="UniProtKB-KW"/>
</dbReference>
<dbReference type="GO" id="GO:0015232">
    <property type="term" value="F:heme transmembrane transporter activity"/>
    <property type="evidence" value="ECO:0007669"/>
    <property type="project" value="InterPro"/>
</dbReference>
<dbReference type="GO" id="GO:0046872">
    <property type="term" value="F:metal ion binding"/>
    <property type="evidence" value="ECO:0007669"/>
    <property type="project" value="UniProtKB-KW"/>
</dbReference>
<dbReference type="CDD" id="cd06920">
    <property type="entry name" value="NEAT"/>
    <property type="match status" value="1"/>
</dbReference>
<dbReference type="Gene3D" id="1.20.58.1270">
    <property type="match status" value="1"/>
</dbReference>
<dbReference type="Gene3D" id="2.60.40.1850">
    <property type="match status" value="2"/>
</dbReference>
<dbReference type="InterPro" id="IPR019929">
    <property type="entry name" value="Iron-reg_IsdB"/>
</dbReference>
<dbReference type="InterPro" id="IPR048652">
    <property type="entry name" value="Isd_H_B_linker"/>
</dbReference>
<dbReference type="InterPro" id="IPR050436">
    <property type="entry name" value="IsdA"/>
</dbReference>
<dbReference type="InterPro" id="IPR019931">
    <property type="entry name" value="LPXTG_anchor"/>
</dbReference>
<dbReference type="InterPro" id="IPR006635">
    <property type="entry name" value="NEAT_dom"/>
</dbReference>
<dbReference type="InterPro" id="IPR037250">
    <property type="entry name" value="NEAT_dom_sf"/>
</dbReference>
<dbReference type="InterPro" id="IPR005877">
    <property type="entry name" value="YSIRK_signal_dom"/>
</dbReference>
<dbReference type="NCBIfam" id="TIGR03657">
    <property type="entry name" value="IsdB"/>
    <property type="match status" value="1"/>
</dbReference>
<dbReference type="NCBIfam" id="TIGR01167">
    <property type="entry name" value="LPXTG_anchor"/>
    <property type="match status" value="1"/>
</dbReference>
<dbReference type="NCBIfam" id="TIGR01168">
    <property type="entry name" value="YSIRK_signal"/>
    <property type="match status" value="1"/>
</dbReference>
<dbReference type="PANTHER" id="PTHR37824">
    <property type="entry name" value="IRON-REGULATED SURFACE DETERMINANT PROTEIN C"/>
    <property type="match status" value="1"/>
</dbReference>
<dbReference type="PANTHER" id="PTHR37824:SF1">
    <property type="entry name" value="IRON-REGULATED SURFACE DETERMINANT PROTEIN C"/>
    <property type="match status" value="1"/>
</dbReference>
<dbReference type="Pfam" id="PF00746">
    <property type="entry name" value="Gram_pos_anchor"/>
    <property type="match status" value="1"/>
</dbReference>
<dbReference type="Pfam" id="PF20861">
    <property type="entry name" value="Isd_H_B_linker"/>
    <property type="match status" value="1"/>
</dbReference>
<dbReference type="Pfam" id="PF05031">
    <property type="entry name" value="NEAT"/>
    <property type="match status" value="2"/>
</dbReference>
<dbReference type="Pfam" id="PF04650">
    <property type="entry name" value="YSIRK_signal"/>
    <property type="match status" value="1"/>
</dbReference>
<dbReference type="SMART" id="SM00725">
    <property type="entry name" value="NEAT"/>
    <property type="match status" value="2"/>
</dbReference>
<dbReference type="SUPFAM" id="SSF158911">
    <property type="entry name" value="NEAT domain-like"/>
    <property type="match status" value="2"/>
</dbReference>
<dbReference type="PROSITE" id="PS50847">
    <property type="entry name" value="GRAM_POS_ANCHORING"/>
    <property type="match status" value="1"/>
</dbReference>
<dbReference type="PROSITE" id="PS50978">
    <property type="entry name" value="NEAT"/>
    <property type="match status" value="2"/>
</dbReference>
<keyword id="KW-0134">Cell wall</keyword>
<keyword id="KW-0349">Heme</keyword>
<keyword id="KW-0408">Iron</keyword>
<keyword id="KW-0479">Metal-binding</keyword>
<keyword id="KW-0572">Peptidoglycan-anchor</keyword>
<keyword id="KW-0677">Repeat</keyword>
<keyword id="KW-0964">Secreted</keyword>
<keyword id="KW-0732">Signal</keyword>
<keyword id="KW-0843">Virulence</keyword>
<accession>Q6GHV7</accession>
<name>ISDB_STAAR</name>
<proteinExistence type="evidence at transcript level"/>